<organism>
    <name type="scientific">Xenopus laevis</name>
    <name type="common">African clawed frog</name>
    <dbReference type="NCBI Taxonomy" id="8355"/>
    <lineage>
        <taxon>Eukaryota</taxon>
        <taxon>Metazoa</taxon>
        <taxon>Chordata</taxon>
        <taxon>Craniata</taxon>
        <taxon>Vertebrata</taxon>
        <taxon>Euteleostomi</taxon>
        <taxon>Amphibia</taxon>
        <taxon>Batrachia</taxon>
        <taxon>Anura</taxon>
        <taxon>Pipoidea</taxon>
        <taxon>Pipidae</taxon>
        <taxon>Xenopodinae</taxon>
        <taxon>Xenopus</taxon>
        <taxon>Xenopus</taxon>
    </lineage>
</organism>
<name>NEIL3_XENLA</name>
<keyword id="KW-0158">Chromosome</keyword>
<keyword id="KW-0227">DNA damage</keyword>
<keyword id="KW-0234">DNA repair</keyword>
<keyword id="KW-0238">DNA-binding</keyword>
<keyword id="KW-0326">Glycosidase</keyword>
<keyword id="KW-0378">Hydrolase</keyword>
<keyword id="KW-0456">Lyase</keyword>
<keyword id="KW-0479">Metal-binding</keyword>
<keyword id="KW-0511">Multifunctional enzyme</keyword>
<keyword id="KW-0539">Nucleus</keyword>
<keyword id="KW-1185">Reference proteome</keyword>
<keyword id="KW-0677">Repeat</keyword>
<keyword id="KW-0862">Zinc</keyword>
<keyword id="KW-0863">Zinc-finger</keyword>
<evidence type="ECO:0000250" key="1">
    <source>
        <dbReference type="UniProtKB" id="Q8TAT5"/>
    </source>
</evidence>
<evidence type="ECO:0000255" key="2">
    <source>
        <dbReference type="PROSITE-ProRule" id="PRU00322"/>
    </source>
</evidence>
<evidence type="ECO:0000255" key="3">
    <source>
        <dbReference type="PROSITE-ProRule" id="PRU00391"/>
    </source>
</evidence>
<evidence type="ECO:0000255" key="4">
    <source>
        <dbReference type="PROSITE-ProRule" id="PRU00392"/>
    </source>
</evidence>
<evidence type="ECO:0000255" key="5">
    <source>
        <dbReference type="PROSITE-ProRule" id="PRU01343"/>
    </source>
</evidence>
<evidence type="ECO:0000256" key="6">
    <source>
        <dbReference type="SAM" id="MobiDB-lite"/>
    </source>
</evidence>
<evidence type="ECO:0000269" key="7">
    <source>
    </source>
</evidence>
<evidence type="ECO:0000312" key="8">
    <source>
        <dbReference type="EMBL" id="OCT99612.1"/>
    </source>
</evidence>
<evidence type="ECO:0000312" key="9">
    <source>
        <dbReference type="Proteomes" id="UP000186698"/>
    </source>
</evidence>
<evidence type="ECO:0000312" key="10">
    <source>
        <dbReference type="Xenbase" id="XB-GENE-1001617"/>
    </source>
</evidence>
<sequence>MEALPPQVLKPLDCMSIYSRHREPENRHNELSTGRCGRGHVIFSSMKALQPQVLKPTGSHANLQQVLYAPAATIITAPASSHNDLSSLTGCSYAGVETLGKELFIYFGLKAMRVHFGMNGSMRINQPMKKGQENGRPIPIAVLEVQLTKDLICFYESTVDVRNASECQEKIRFFEELDVCSSKFSFPRAECEIKKQRTRMLCDILLDQMILPGVGNIIKNEALFDSGLHPGVQAGLLTDEQVSHLVKMTRDFTLLFYKCRKSGSALYKHYKVYKRPNCGQCGTKITVCRLGEHNRMTYFCPKCQKDKPQHVDVSKLPTRNSLIGWVQRTASNANEHVATSKEEHWACAVCTLINKPSDKQCDACLTLRPEVSSLAVSDEAAELNTDLVKYPCNNFAKVLPELKLNRRTAFGNTTLVLTDFGAKEGLADKNSQQNILNRSTFDVPLNNKYYHTKTPSNKRSNENEHWTNTLNAVNGHSAASNNVFNHPQKKLKTGHTTSNTIHLSSTISSPQSKMTGDAAAKTGNPQCSAHNVPCALQVVRKEGENKGRSFYTCSLPRERRCQYFEWADLHFPFCNHGKRCIVRTVLKIGPNNGKNFYVCPMGKDKQCNFFEWAKTE</sequence>
<accession>A0A1L8HU22</accession>
<dbReference type="EC" id="3.2.2.-" evidence="1"/>
<dbReference type="EC" id="4.2.99.18" evidence="7"/>
<dbReference type="EMBL" id="CM004466">
    <property type="protein sequence ID" value="OCT99612.1"/>
    <property type="molecule type" value="Genomic_DNA"/>
</dbReference>
<dbReference type="SMR" id="A0A1L8HU22"/>
<dbReference type="STRING" id="8355.A0A1L8HU22"/>
<dbReference type="PaxDb" id="8355-A0A1L8HU22"/>
<dbReference type="GeneID" id="100380996"/>
<dbReference type="KEGG" id="xla:100380996"/>
<dbReference type="AGR" id="Xenbase:XB-GENE-1001617"/>
<dbReference type="CTD" id="100380996"/>
<dbReference type="Xenbase" id="XB-GENE-1001617">
    <property type="gene designation" value="neil3.L"/>
</dbReference>
<dbReference type="OMA" id="GMKGSVM"/>
<dbReference type="OrthoDB" id="498125at2759"/>
<dbReference type="Proteomes" id="UP000186698">
    <property type="component" value="Chromosome 1L"/>
</dbReference>
<dbReference type="Proteomes" id="UP000694892">
    <property type="component" value="Chromosome 1L"/>
</dbReference>
<dbReference type="Bgee" id="100380996">
    <property type="expression patterns" value="Expressed in egg cell and 15 other cell types or tissues"/>
</dbReference>
<dbReference type="GO" id="GO:0005694">
    <property type="term" value="C:chromosome"/>
    <property type="evidence" value="ECO:0007669"/>
    <property type="project" value="UniProtKB-SubCell"/>
</dbReference>
<dbReference type="GO" id="GO:0005654">
    <property type="term" value="C:nucleoplasm"/>
    <property type="evidence" value="ECO:0000304"/>
    <property type="project" value="Reactome"/>
</dbReference>
<dbReference type="GO" id="GO:0005634">
    <property type="term" value="C:nucleus"/>
    <property type="evidence" value="ECO:0000318"/>
    <property type="project" value="GO_Central"/>
</dbReference>
<dbReference type="GO" id="GO:0140078">
    <property type="term" value="F:class I DNA-(apurinic or apyrimidinic site) endonuclease activity"/>
    <property type="evidence" value="ECO:0007669"/>
    <property type="project" value="UniProtKB-EC"/>
</dbReference>
<dbReference type="GO" id="GO:0003684">
    <property type="term" value="F:damaged DNA binding"/>
    <property type="evidence" value="ECO:0000314"/>
    <property type="project" value="UniProtKB"/>
</dbReference>
<dbReference type="GO" id="GO:0019104">
    <property type="term" value="F:DNA N-glycosylase activity"/>
    <property type="evidence" value="ECO:0000318"/>
    <property type="project" value="GO_Central"/>
</dbReference>
<dbReference type="GO" id="GO:0003906">
    <property type="term" value="F:DNA-(apurinic or apyrimidinic site) endonuclease activity"/>
    <property type="evidence" value="ECO:0000314"/>
    <property type="project" value="UniProtKB"/>
</dbReference>
<dbReference type="GO" id="GO:1904931">
    <property type="term" value="F:MCM complex binding"/>
    <property type="evidence" value="ECO:0000314"/>
    <property type="project" value="UniProtKB"/>
</dbReference>
<dbReference type="GO" id="GO:0008270">
    <property type="term" value="F:zinc ion binding"/>
    <property type="evidence" value="ECO:0007669"/>
    <property type="project" value="UniProtKB-KW"/>
</dbReference>
<dbReference type="GO" id="GO:0006284">
    <property type="term" value="P:base-excision repair"/>
    <property type="evidence" value="ECO:0000318"/>
    <property type="project" value="GO_Central"/>
</dbReference>
<dbReference type="GO" id="GO:0036297">
    <property type="term" value="P:interstrand cross-link repair"/>
    <property type="evidence" value="ECO:0000314"/>
    <property type="project" value="UniProtKB"/>
</dbReference>
<dbReference type="FunFam" id="1.10.8.50:FF:000008">
    <property type="entry name" value="Nei-like DNA glycosylase 3"/>
    <property type="match status" value="1"/>
</dbReference>
<dbReference type="Gene3D" id="1.10.8.50">
    <property type="match status" value="1"/>
</dbReference>
<dbReference type="Gene3D" id="3.20.190.10">
    <property type="entry name" value="MutM-like, N-terminal"/>
    <property type="match status" value="1"/>
</dbReference>
<dbReference type="Gene3D" id="2.30.30.380">
    <property type="entry name" value="Zn-finger domain of Sec23/24"/>
    <property type="match status" value="1"/>
</dbReference>
<dbReference type="InterPro" id="IPR015886">
    <property type="entry name" value="DNA_glyclase/AP_lyase_DNA-bd"/>
</dbReference>
<dbReference type="InterPro" id="IPR015887">
    <property type="entry name" value="DNA_glyclase_Znf_dom_DNA_BS"/>
</dbReference>
<dbReference type="InterPro" id="IPR035937">
    <property type="entry name" value="MutM-like_N-ter"/>
</dbReference>
<dbReference type="InterPro" id="IPR010979">
    <property type="entry name" value="Ribosomal_uS13-like_H2TH"/>
</dbReference>
<dbReference type="InterPro" id="IPR000214">
    <property type="entry name" value="Znf_DNA_glyclase/AP_lyase"/>
</dbReference>
<dbReference type="InterPro" id="IPR010666">
    <property type="entry name" value="Znf_GRF"/>
</dbReference>
<dbReference type="InterPro" id="IPR001876">
    <property type="entry name" value="Znf_RanBP2"/>
</dbReference>
<dbReference type="InterPro" id="IPR036443">
    <property type="entry name" value="Znf_RanBP2_sf"/>
</dbReference>
<dbReference type="PANTHER" id="PTHR22993:SF10">
    <property type="entry name" value="ENDONUCLEASE 8-LIKE 3"/>
    <property type="match status" value="1"/>
</dbReference>
<dbReference type="PANTHER" id="PTHR22993">
    <property type="entry name" value="FORMAMIDOPYRIMIDINE-DNA GLYCOSYLASE"/>
    <property type="match status" value="1"/>
</dbReference>
<dbReference type="Pfam" id="PF06831">
    <property type="entry name" value="H2TH"/>
    <property type="match status" value="1"/>
</dbReference>
<dbReference type="Pfam" id="PF06839">
    <property type="entry name" value="Zn_ribbon_GRF"/>
    <property type="match status" value="2"/>
</dbReference>
<dbReference type="SMART" id="SM01232">
    <property type="entry name" value="H2TH"/>
    <property type="match status" value="1"/>
</dbReference>
<dbReference type="SMART" id="SM00547">
    <property type="entry name" value="ZnF_RBZ"/>
    <property type="match status" value="1"/>
</dbReference>
<dbReference type="SUPFAM" id="SSF81624">
    <property type="entry name" value="N-terminal domain of MutM-like DNA repair proteins"/>
    <property type="match status" value="1"/>
</dbReference>
<dbReference type="SUPFAM" id="SSF90209">
    <property type="entry name" value="Ran binding protein zinc finger-like"/>
    <property type="match status" value="1"/>
</dbReference>
<dbReference type="SUPFAM" id="SSF46946">
    <property type="entry name" value="S13-like H2TH domain"/>
    <property type="match status" value="1"/>
</dbReference>
<dbReference type="PROSITE" id="PS01242">
    <property type="entry name" value="ZF_FPG_1"/>
    <property type="match status" value="1"/>
</dbReference>
<dbReference type="PROSITE" id="PS51066">
    <property type="entry name" value="ZF_FPG_2"/>
    <property type="match status" value="1"/>
</dbReference>
<dbReference type="PROSITE" id="PS51999">
    <property type="entry name" value="ZF_GRF"/>
    <property type="match status" value="2"/>
</dbReference>
<dbReference type="PROSITE" id="PS01358">
    <property type="entry name" value="ZF_RANBP2_1"/>
    <property type="match status" value="1"/>
</dbReference>
<dbReference type="PROSITE" id="PS50199">
    <property type="entry name" value="ZF_RANBP2_2"/>
    <property type="match status" value="1"/>
</dbReference>
<comment type="function">
    <text evidence="7">DNA glycosylase which prefers single-stranded DNA (ssDNA), or partially ssDNA structures such as bubble and fork structures, to double-stranded DNA (dsDNA) (PubMed:30842657). Mediates interstrand cross-link repair in response to replication stress: recruited to replication stress sites via interaction with ubiquitinated CMG helicase and acts by mediating DNA glycosylase activity (PubMed:30842657). Cleaves one of the two N-glycosyl bonds comprising the interstrand cross-link, which avoids the formation of a double-strand break but generates an abasic site that is bypassed by translesion synthesis polymerases (PubMed:30842657).</text>
</comment>
<comment type="catalytic activity">
    <reaction evidence="4 7">
        <text>2'-deoxyribonucleotide-(2'-deoxyribose 5'-phosphate)-2'-deoxyribonucleotide-DNA = a 3'-end 2'-deoxyribonucleotide-(2,3-dehydro-2,3-deoxyribose 5'-phosphate)-DNA + a 5'-end 5'-phospho-2'-deoxyribonucleoside-DNA + H(+)</text>
        <dbReference type="Rhea" id="RHEA:66592"/>
        <dbReference type="Rhea" id="RHEA-COMP:13180"/>
        <dbReference type="Rhea" id="RHEA-COMP:16897"/>
        <dbReference type="Rhea" id="RHEA-COMP:17067"/>
        <dbReference type="ChEBI" id="CHEBI:15378"/>
        <dbReference type="ChEBI" id="CHEBI:136412"/>
        <dbReference type="ChEBI" id="CHEBI:157695"/>
        <dbReference type="ChEBI" id="CHEBI:167181"/>
        <dbReference type="EC" id="4.2.99.18"/>
    </reaction>
</comment>
<comment type="subcellular location">
    <subcellularLocation>
        <location evidence="1">Nucleus</location>
    </subcellularLocation>
    <subcellularLocation>
        <location evidence="7">Chromosome</location>
    </subcellularLocation>
    <text evidence="7">Recruited to replication stress sites via interaction with ubiquitinated CMG helicase.</text>
</comment>
<comment type="domain">
    <text evidence="7">The RanBP2-type zinc-finger, also named NZF zinc finger, recognizes and binds ubiquitinated CMG helicase complex (PubMed:30842657). The GRF-type zinc-fingers recognize single-stranded DNA (ssDNA), possibly on the lagging strand template (PubMed:30842657).</text>
</comment>
<comment type="similarity">
    <text evidence="4">Belongs to the FPG family.</text>
</comment>
<proteinExistence type="evidence at protein level"/>
<feature type="chain" id="PRO_0000451422" description="Endonuclease 8-like 3">
    <location>
        <begin position="1"/>
        <end position="616"/>
    </location>
</feature>
<feature type="zinc finger region" description="FPG-type" evidence="3">
    <location>
        <begin position="271"/>
        <end position="305"/>
    </location>
</feature>
<feature type="zinc finger region" description="RanBP2-type" evidence="2">
    <location>
        <begin position="341"/>
        <end position="370"/>
    </location>
</feature>
<feature type="zinc finger region" description="GRF-type 1" evidence="5">
    <location>
        <begin position="527"/>
        <end position="570"/>
    </location>
</feature>
<feature type="zinc finger region" description="GRF-type 2" evidence="5">
    <location>
        <begin position="574"/>
        <end position="616"/>
    </location>
</feature>
<feature type="region of interest" description="Disordered" evidence="6">
    <location>
        <begin position="491"/>
        <end position="524"/>
    </location>
</feature>
<feature type="compositionally biased region" description="Polar residues" evidence="6">
    <location>
        <begin position="494"/>
        <end position="514"/>
    </location>
</feature>
<feature type="binding site" evidence="5">
    <location>
        <position position="527"/>
    </location>
    <ligand>
        <name>Zn(2+)</name>
        <dbReference type="ChEBI" id="CHEBI:29105"/>
        <label>1</label>
    </ligand>
</feature>
<feature type="binding site" evidence="5">
    <location>
        <position position="530"/>
    </location>
    <ligand>
        <name>Zn(2+)</name>
        <dbReference type="ChEBI" id="CHEBI:29105"/>
        <label>1</label>
    </ligand>
</feature>
<feature type="binding site" evidence="5">
    <location>
        <position position="553"/>
    </location>
    <ligand>
        <name>Zn(2+)</name>
        <dbReference type="ChEBI" id="CHEBI:29105"/>
        <label>1</label>
    </ligand>
</feature>
<feature type="binding site" evidence="5">
    <location>
        <position position="561"/>
    </location>
    <ligand>
        <name>Zn(2+)</name>
        <dbReference type="ChEBI" id="CHEBI:29105"/>
        <label>1</label>
    </ligand>
</feature>
<feature type="binding site" evidence="5">
    <location>
        <position position="574"/>
    </location>
    <ligand>
        <name>Zn(2+)</name>
        <dbReference type="ChEBI" id="CHEBI:29105"/>
        <label>2</label>
    </ligand>
</feature>
<feature type="binding site" evidence="5">
    <location>
        <position position="576"/>
    </location>
    <ligand>
        <name>Zn(2+)</name>
        <dbReference type="ChEBI" id="CHEBI:29105"/>
        <label>2</label>
    </ligand>
</feature>
<feature type="binding site" evidence="5">
    <location>
        <position position="599"/>
    </location>
    <ligand>
        <name>Zn(2+)</name>
        <dbReference type="ChEBI" id="CHEBI:29105"/>
        <label>2</label>
    </ligand>
</feature>
<feature type="binding site" evidence="5">
    <location>
        <position position="607"/>
    </location>
    <ligand>
        <name>Zn(2+)</name>
        <dbReference type="ChEBI" id="CHEBI:29105"/>
        <label>2</label>
    </ligand>
</feature>
<feature type="site" description="Required for glycosylase and lyase activities" evidence="1">
    <location>
        <position position="101"/>
    </location>
</feature>
<feature type="mutagenesis site" description="Decreased binding to interstrand cross-links." evidence="7">
    <original>TL</original>
    <variation>LV</variation>
    <location>
        <begin position="351"/>
        <end position="352"/>
    </location>
</feature>
<protein>
    <recommendedName>
        <fullName>Endonuclease 8-like 3</fullName>
        <ecNumber evidence="1">3.2.2.-</ecNumber>
        <ecNumber evidence="7">4.2.99.18</ecNumber>
    </recommendedName>
    <alternativeName>
        <fullName>DNA glycosylase/AP lyase Neil3</fullName>
    </alternativeName>
    <alternativeName>
        <fullName>Endonuclease VIII-like 3</fullName>
    </alternativeName>
    <alternativeName>
        <fullName>Nei-like protein 3</fullName>
    </alternativeName>
</protein>
<reference evidence="9" key="1">
    <citation type="journal article" date="2016" name="Nature">
        <title>Genome evolution in the allotetraploid frog Xenopus laevis.</title>
        <authorList>
            <person name="Session A.M."/>
            <person name="Uno Y."/>
            <person name="Kwon T."/>
            <person name="Chapman J.A."/>
            <person name="Toyoda A."/>
            <person name="Takahashi S."/>
            <person name="Fukui A."/>
            <person name="Hikosaka A."/>
            <person name="Suzuki A."/>
            <person name="Kondo M."/>
            <person name="van Heeringen S.J."/>
            <person name="Quigley I."/>
            <person name="Heinz S."/>
            <person name="Ogino H."/>
            <person name="Ochi H."/>
            <person name="Hellsten U."/>
            <person name="Lyons J.B."/>
            <person name="Simakov O."/>
            <person name="Putnam N."/>
            <person name="Stites J."/>
            <person name="Kuroki Y."/>
            <person name="Tanaka T."/>
            <person name="Michiue T."/>
            <person name="Watanabe M."/>
            <person name="Bogdanovic O."/>
            <person name="Lister R."/>
            <person name="Georgiou G."/>
            <person name="Paranjpe S.S."/>
            <person name="van Kruijsbergen I."/>
            <person name="Shu S."/>
            <person name="Carlson J."/>
            <person name="Kinoshita T."/>
            <person name="Ohta Y."/>
            <person name="Mawaribuchi S."/>
            <person name="Jenkins J."/>
            <person name="Grimwood J."/>
            <person name="Schmutz J."/>
            <person name="Mitros T."/>
            <person name="Mozaffari S.V."/>
            <person name="Suzuki Y."/>
            <person name="Haramoto Y."/>
            <person name="Yamamoto T.S."/>
            <person name="Takagi C."/>
            <person name="Heald R."/>
            <person name="Miller K."/>
            <person name="Haudenschild C."/>
            <person name="Kitzman J."/>
            <person name="Nakayama T."/>
            <person name="Izutsu Y."/>
            <person name="Robert J."/>
            <person name="Fortriede J."/>
            <person name="Burns K."/>
            <person name="Lotay V."/>
            <person name="Karimi K."/>
            <person name="Yasuoka Y."/>
            <person name="Dichmann D.S."/>
            <person name="Flajnik M.F."/>
            <person name="Houston D.W."/>
            <person name="Shendure J."/>
            <person name="DuPasquier L."/>
            <person name="Vize P.D."/>
            <person name="Zorn A.M."/>
            <person name="Ito M."/>
            <person name="Marcotte E.M."/>
            <person name="Wallingford J.B."/>
            <person name="Ito Y."/>
            <person name="Asashima M."/>
            <person name="Ueno N."/>
            <person name="Matsuda Y."/>
            <person name="Veenstra G.J."/>
            <person name="Fujiyama A."/>
            <person name="Harland R.M."/>
            <person name="Taira M."/>
            <person name="Rokhsar D.S."/>
        </authorList>
    </citation>
    <scope>NUCLEOTIDE SEQUENCE [LARGE SCALE GENOMIC DNA]</scope>
    <source>
        <strain>J</strain>
    </source>
</reference>
<reference key="2">
    <citation type="journal article" date="2019" name="Nature">
        <title>TRAIP is a master regulator of DNA interstrand crosslink repair.</title>
        <authorList>
            <person name="Wu R.A."/>
            <person name="Semlow D.R."/>
            <person name="Kamimae-Lanning A.N."/>
            <person name="Kochenova O.V."/>
            <person name="Chistol G."/>
            <person name="Hodskinson M.R."/>
            <person name="Amunugama R."/>
            <person name="Sparks J.L."/>
            <person name="Wang M."/>
            <person name="Deng L."/>
            <person name="Mimoso C.A."/>
            <person name="Low E."/>
            <person name="Patel K.J."/>
            <person name="Walter J.C."/>
        </authorList>
    </citation>
    <scope>FUNCTION</scope>
    <scope>CATALYTIC ACTIVITY</scope>
    <scope>SUBCELLULAR LOCATION</scope>
    <scope>DOMAIN</scope>
    <scope>MUTAGENESIS OF 351-THR-LEU-352</scope>
</reference>
<gene>
    <name evidence="10" type="primary">neil3</name>
    <name evidence="8" type="ORF">XELAEV_18005394mg</name>
</gene>